<gene>
    <name type="primary">Glrx5</name>
</gene>
<proteinExistence type="evidence at protein level"/>
<organism>
    <name type="scientific">Mus musculus</name>
    <name type="common">Mouse</name>
    <dbReference type="NCBI Taxonomy" id="10090"/>
    <lineage>
        <taxon>Eukaryota</taxon>
        <taxon>Metazoa</taxon>
        <taxon>Chordata</taxon>
        <taxon>Craniata</taxon>
        <taxon>Vertebrata</taxon>
        <taxon>Euteleostomi</taxon>
        <taxon>Mammalia</taxon>
        <taxon>Eutheria</taxon>
        <taxon>Euarchontoglires</taxon>
        <taxon>Glires</taxon>
        <taxon>Rodentia</taxon>
        <taxon>Myomorpha</taxon>
        <taxon>Muroidea</taxon>
        <taxon>Muridae</taxon>
        <taxon>Murinae</taxon>
        <taxon>Mus</taxon>
        <taxon>Mus</taxon>
    </lineage>
</organism>
<reference key="1">
    <citation type="journal article" date="2005" name="Nature">
        <title>Deficiency of glutaredoxin 5 reveals Fe-S clusters are required for vertebrate haem synthesis.</title>
        <authorList>
            <consortium name="The Tuebingen 2000 screen consortium"/>
            <person name="Wingert R.A."/>
            <person name="Galloway J.L."/>
            <person name="Barut B."/>
            <person name="Foott H."/>
            <person name="Fraenkel P."/>
            <person name="Axe J.L."/>
            <person name="Weber G.J."/>
            <person name="Dooley K."/>
            <person name="Davidson A.J."/>
            <person name="Schmid B."/>
            <person name="Paw B.H."/>
            <person name="Shaw G.C."/>
            <person name="Kingsley P."/>
            <person name="Palis J."/>
            <person name="Schubert H."/>
            <person name="Chen O."/>
            <person name="Kaplan J."/>
            <person name="Zon L.I."/>
        </authorList>
    </citation>
    <scope>NUCLEOTIDE SEQUENCE [MRNA]</scope>
    <scope>DEVELOPMENTAL STAGE</scope>
</reference>
<reference key="2">
    <citation type="journal article" date="2005" name="Nature">
        <authorList>
            <consortium name="The Tuebingen 2000 screen consortium"/>
            <person name="Wingert R.A."/>
            <person name="Galloway J.L."/>
            <person name="Barut B."/>
            <person name="Foott H."/>
            <person name="Fraenkel P."/>
            <person name="Axe J.L."/>
            <person name="Weber G.J."/>
            <person name="Dooley K."/>
            <person name="Davidson A.J."/>
            <person name="Schmid B."/>
            <person name="Paw B.H."/>
            <person name="Shaw G.C."/>
            <person name="Kingsley P."/>
            <person name="Palis J."/>
            <person name="Schubert H."/>
            <person name="Chen O."/>
            <person name="Kaplan J."/>
            <person name="Zon L.I."/>
        </authorList>
    </citation>
    <scope>ERRATUM OF PUBMED:16110529</scope>
</reference>
<reference key="3">
    <citation type="journal article" date="2005" name="Science">
        <title>The transcriptional landscape of the mammalian genome.</title>
        <authorList>
            <person name="Carninci P."/>
            <person name="Kasukawa T."/>
            <person name="Katayama S."/>
            <person name="Gough J."/>
            <person name="Frith M.C."/>
            <person name="Maeda N."/>
            <person name="Oyama R."/>
            <person name="Ravasi T."/>
            <person name="Lenhard B."/>
            <person name="Wells C."/>
            <person name="Kodzius R."/>
            <person name="Shimokawa K."/>
            <person name="Bajic V.B."/>
            <person name="Brenner S.E."/>
            <person name="Batalov S."/>
            <person name="Forrest A.R."/>
            <person name="Zavolan M."/>
            <person name="Davis M.J."/>
            <person name="Wilming L.G."/>
            <person name="Aidinis V."/>
            <person name="Allen J.E."/>
            <person name="Ambesi-Impiombato A."/>
            <person name="Apweiler R."/>
            <person name="Aturaliya R.N."/>
            <person name="Bailey T.L."/>
            <person name="Bansal M."/>
            <person name="Baxter L."/>
            <person name="Beisel K.W."/>
            <person name="Bersano T."/>
            <person name="Bono H."/>
            <person name="Chalk A.M."/>
            <person name="Chiu K.P."/>
            <person name="Choudhary V."/>
            <person name="Christoffels A."/>
            <person name="Clutterbuck D.R."/>
            <person name="Crowe M.L."/>
            <person name="Dalla E."/>
            <person name="Dalrymple B.P."/>
            <person name="de Bono B."/>
            <person name="Della Gatta G."/>
            <person name="di Bernardo D."/>
            <person name="Down T."/>
            <person name="Engstrom P."/>
            <person name="Fagiolini M."/>
            <person name="Faulkner G."/>
            <person name="Fletcher C.F."/>
            <person name="Fukushima T."/>
            <person name="Furuno M."/>
            <person name="Futaki S."/>
            <person name="Gariboldi M."/>
            <person name="Georgii-Hemming P."/>
            <person name="Gingeras T.R."/>
            <person name="Gojobori T."/>
            <person name="Green R.E."/>
            <person name="Gustincich S."/>
            <person name="Harbers M."/>
            <person name="Hayashi Y."/>
            <person name="Hensch T.K."/>
            <person name="Hirokawa N."/>
            <person name="Hill D."/>
            <person name="Huminiecki L."/>
            <person name="Iacono M."/>
            <person name="Ikeo K."/>
            <person name="Iwama A."/>
            <person name="Ishikawa T."/>
            <person name="Jakt M."/>
            <person name="Kanapin A."/>
            <person name="Katoh M."/>
            <person name="Kawasawa Y."/>
            <person name="Kelso J."/>
            <person name="Kitamura H."/>
            <person name="Kitano H."/>
            <person name="Kollias G."/>
            <person name="Krishnan S.P."/>
            <person name="Kruger A."/>
            <person name="Kummerfeld S.K."/>
            <person name="Kurochkin I.V."/>
            <person name="Lareau L.F."/>
            <person name="Lazarevic D."/>
            <person name="Lipovich L."/>
            <person name="Liu J."/>
            <person name="Liuni S."/>
            <person name="McWilliam S."/>
            <person name="Madan Babu M."/>
            <person name="Madera M."/>
            <person name="Marchionni L."/>
            <person name="Matsuda H."/>
            <person name="Matsuzawa S."/>
            <person name="Miki H."/>
            <person name="Mignone F."/>
            <person name="Miyake S."/>
            <person name="Morris K."/>
            <person name="Mottagui-Tabar S."/>
            <person name="Mulder N."/>
            <person name="Nakano N."/>
            <person name="Nakauchi H."/>
            <person name="Ng P."/>
            <person name="Nilsson R."/>
            <person name="Nishiguchi S."/>
            <person name="Nishikawa S."/>
            <person name="Nori F."/>
            <person name="Ohara O."/>
            <person name="Okazaki Y."/>
            <person name="Orlando V."/>
            <person name="Pang K.C."/>
            <person name="Pavan W.J."/>
            <person name="Pavesi G."/>
            <person name="Pesole G."/>
            <person name="Petrovsky N."/>
            <person name="Piazza S."/>
            <person name="Reed J."/>
            <person name="Reid J.F."/>
            <person name="Ring B.Z."/>
            <person name="Ringwald M."/>
            <person name="Rost B."/>
            <person name="Ruan Y."/>
            <person name="Salzberg S.L."/>
            <person name="Sandelin A."/>
            <person name="Schneider C."/>
            <person name="Schoenbach C."/>
            <person name="Sekiguchi K."/>
            <person name="Semple C.A."/>
            <person name="Seno S."/>
            <person name="Sessa L."/>
            <person name="Sheng Y."/>
            <person name="Shibata Y."/>
            <person name="Shimada H."/>
            <person name="Shimada K."/>
            <person name="Silva D."/>
            <person name="Sinclair B."/>
            <person name="Sperling S."/>
            <person name="Stupka E."/>
            <person name="Sugiura K."/>
            <person name="Sultana R."/>
            <person name="Takenaka Y."/>
            <person name="Taki K."/>
            <person name="Tammoja K."/>
            <person name="Tan S.L."/>
            <person name="Tang S."/>
            <person name="Taylor M.S."/>
            <person name="Tegner J."/>
            <person name="Teichmann S.A."/>
            <person name="Ueda H.R."/>
            <person name="van Nimwegen E."/>
            <person name="Verardo R."/>
            <person name="Wei C.L."/>
            <person name="Yagi K."/>
            <person name="Yamanishi H."/>
            <person name="Zabarovsky E."/>
            <person name="Zhu S."/>
            <person name="Zimmer A."/>
            <person name="Hide W."/>
            <person name="Bult C."/>
            <person name="Grimmond S.M."/>
            <person name="Teasdale R.D."/>
            <person name="Liu E.T."/>
            <person name="Brusic V."/>
            <person name="Quackenbush J."/>
            <person name="Wahlestedt C."/>
            <person name="Mattick J.S."/>
            <person name="Hume D.A."/>
            <person name="Kai C."/>
            <person name="Sasaki D."/>
            <person name="Tomaru Y."/>
            <person name="Fukuda S."/>
            <person name="Kanamori-Katayama M."/>
            <person name="Suzuki M."/>
            <person name="Aoki J."/>
            <person name="Arakawa T."/>
            <person name="Iida J."/>
            <person name="Imamura K."/>
            <person name="Itoh M."/>
            <person name="Kato T."/>
            <person name="Kawaji H."/>
            <person name="Kawagashira N."/>
            <person name="Kawashima T."/>
            <person name="Kojima M."/>
            <person name="Kondo S."/>
            <person name="Konno H."/>
            <person name="Nakano K."/>
            <person name="Ninomiya N."/>
            <person name="Nishio T."/>
            <person name="Okada M."/>
            <person name="Plessy C."/>
            <person name="Shibata K."/>
            <person name="Shiraki T."/>
            <person name="Suzuki S."/>
            <person name="Tagami M."/>
            <person name="Waki K."/>
            <person name="Watahiki A."/>
            <person name="Okamura-Oho Y."/>
            <person name="Suzuki H."/>
            <person name="Kawai J."/>
            <person name="Hayashizaki Y."/>
        </authorList>
    </citation>
    <scope>NUCLEOTIDE SEQUENCE [LARGE SCALE MRNA]</scope>
    <source>
        <strain>C57BL/6J</strain>
        <tissue>Hippocampus</tissue>
    </source>
</reference>
<reference key="4">
    <citation type="journal article" date="2004" name="Genome Res.">
        <title>The status, quality, and expansion of the NIH full-length cDNA project: the Mammalian Gene Collection (MGC).</title>
        <authorList>
            <consortium name="The MGC Project Team"/>
        </authorList>
    </citation>
    <scope>NUCLEOTIDE SEQUENCE [LARGE SCALE MRNA]</scope>
    <source>
        <strain>C57BL/6J</strain>
        <tissue>Brain</tissue>
    </source>
</reference>
<reference key="5">
    <citation type="journal article" date="2009" name="Bone">
        <title>Glutaredoxin 5 regulates osteoblast apoptosis by protecting against oxidative stress.</title>
        <authorList>
            <person name="Linares G.R."/>
            <person name="Xing W."/>
            <person name="Govoni K.E."/>
            <person name="Chen S.T."/>
            <person name="Mohan S."/>
        </authorList>
    </citation>
    <scope>FUNCTION</scope>
    <scope>TISSUE SPECIFICITY</scope>
</reference>
<reference key="6">
    <citation type="journal article" date="2010" name="Cell">
        <title>A tissue-specific atlas of mouse protein phosphorylation and expression.</title>
        <authorList>
            <person name="Huttlin E.L."/>
            <person name="Jedrychowski M.P."/>
            <person name="Elias J.E."/>
            <person name="Goswami T."/>
            <person name="Rad R."/>
            <person name="Beausoleil S.A."/>
            <person name="Villen J."/>
            <person name="Haas W."/>
            <person name="Sowa M.E."/>
            <person name="Gygi S.P."/>
        </authorList>
    </citation>
    <scope>PHOSPHORYLATION [LARGE SCALE ANALYSIS] AT SER-151</scope>
    <scope>IDENTIFICATION BY MASS SPECTROMETRY [LARGE SCALE ANALYSIS]</scope>
    <source>
        <tissue>Brain</tissue>
        <tissue>Brown adipose tissue</tissue>
        <tissue>Heart</tissue>
        <tissue>Kidney</tissue>
        <tissue>Liver</tissue>
        <tissue>Lung</tissue>
        <tissue>Pancreas</tissue>
        <tissue>Spleen</tissue>
        <tissue>Testis</tissue>
    </source>
</reference>
<reference key="7">
    <citation type="journal article" date="2013" name="Mol. Cell">
        <title>SIRT5-mediated lysine desuccinylation impacts diverse metabolic pathways.</title>
        <authorList>
            <person name="Park J."/>
            <person name="Chen Y."/>
            <person name="Tishkoff D.X."/>
            <person name="Peng C."/>
            <person name="Tan M."/>
            <person name="Dai L."/>
            <person name="Xie Z."/>
            <person name="Zhang Y."/>
            <person name="Zwaans B.M."/>
            <person name="Skinner M.E."/>
            <person name="Lombard D.B."/>
            <person name="Zhao Y."/>
        </authorList>
    </citation>
    <scope>SUCCINYLATION [LARGE SCALE ANALYSIS] AT LYS-55</scope>
    <scope>IDENTIFICATION BY MASS SPECTROMETRY [LARGE SCALE ANALYSIS]</scope>
    <source>
        <tissue>Liver</tissue>
    </source>
</reference>
<accession>Q80Y14</accession>
<accession>Q3YML1</accession>
<accession>Q9D6E9</accession>
<comment type="function">
    <text evidence="1 5">Monothiol glutaredoxin involved in mitochondrial iron-sulfur (Fe/S) cluster transfer (PubMed:19442627). Receives 2Fe/2S clusters from scaffold protein ISCU and mediates their transfer to apoproteins, to the 4Fe/FS cluster biosynthesis machinery, or export from mitochondrion (By similarity). Required for normal regulation of hemoglobin synthesis by the iron-sulfur protein ACO1 (By similarity).</text>
</comment>
<comment type="subunit">
    <text evidence="1">Homodimer. Interacts with ISCU. Interacts with BOLA1.</text>
</comment>
<comment type="subcellular location">
    <subcellularLocation>
        <location evidence="1">Mitochondrion matrix</location>
    </subcellularLocation>
</comment>
<comment type="tissue specificity">
    <text evidence="5">Detected in bone, liver, muscle and kidney.</text>
</comment>
<comment type="developmental stage">
    <text evidence="4">Ubiquitously expressed at 7.5 dpc. At 8.5 dpc, preferential expression in yolk sac blood islands. Progressive down-regulation in maturing primitive red cells between 10.5 and 12.5 dpc. High expression in fetal liver at 12.5 dpc.</text>
</comment>
<comment type="similarity">
    <text evidence="6">Belongs to the glutaredoxin family. Monothiol subfamily.</text>
</comment>
<comment type="sequence caution" evidence="6">
    <conflict type="erroneous initiation">
        <sequence resource="EMBL-CDS" id="AAH50937"/>
    </conflict>
</comment>
<sequence>MSASLSRAAAALLRWGRSAGGGGLPGAGVRAASSGGQAEQLDALVKKDKVVVFLKGTPEQPQCGFSNAVVQILRLHGVRDYAAYNVLDDPELRQGIKDYSNWPTIPQVYLNGEFVGGCDILLQMHQNGDLVEELKKLGIRSALVDEKDQDSK</sequence>
<keyword id="KW-0001">2Fe-2S</keyword>
<keyword id="KW-0408">Iron</keyword>
<keyword id="KW-0411">Iron-sulfur</keyword>
<keyword id="KW-0479">Metal-binding</keyword>
<keyword id="KW-0496">Mitochondrion</keyword>
<keyword id="KW-0597">Phosphoprotein</keyword>
<keyword id="KW-0676">Redox-active center</keyword>
<keyword id="KW-1185">Reference proteome</keyword>
<keyword id="KW-0809">Transit peptide</keyword>
<name>GLRX5_MOUSE</name>
<dbReference type="EMBL" id="DQ083330">
    <property type="protein sequence ID" value="AAZ30730.1"/>
    <property type="molecule type" value="mRNA"/>
</dbReference>
<dbReference type="EMBL" id="AK013761">
    <property type="protein sequence ID" value="BAB28985.1"/>
    <property type="molecule type" value="mRNA"/>
</dbReference>
<dbReference type="EMBL" id="AK050883">
    <property type="protein sequence ID" value="BAC34443.1"/>
    <property type="molecule type" value="mRNA"/>
</dbReference>
<dbReference type="EMBL" id="BC050937">
    <property type="protein sequence ID" value="AAH50937.1"/>
    <property type="status" value="ALT_INIT"/>
    <property type="molecule type" value="mRNA"/>
</dbReference>
<dbReference type="EMBL" id="BC058371">
    <property type="protein sequence ID" value="AAH58371.1"/>
    <property type="molecule type" value="mRNA"/>
</dbReference>
<dbReference type="CCDS" id="CCDS26154.1"/>
<dbReference type="RefSeq" id="NP_082695.1">
    <property type="nucleotide sequence ID" value="NM_028419.3"/>
</dbReference>
<dbReference type="SMR" id="Q80Y14"/>
<dbReference type="BioGRID" id="215731">
    <property type="interactions" value="5"/>
</dbReference>
<dbReference type="FunCoup" id="Q80Y14">
    <property type="interactions" value="1919"/>
</dbReference>
<dbReference type="IntAct" id="Q80Y14">
    <property type="interactions" value="4"/>
</dbReference>
<dbReference type="STRING" id="10090.ENSMUSP00000021522"/>
<dbReference type="GlyGen" id="Q80Y14">
    <property type="glycosylation" value="1 site, 1 O-linked glycan (1 site)"/>
</dbReference>
<dbReference type="iPTMnet" id="Q80Y14"/>
<dbReference type="PhosphoSitePlus" id="Q80Y14"/>
<dbReference type="SwissPalm" id="Q80Y14"/>
<dbReference type="jPOST" id="Q80Y14"/>
<dbReference type="PaxDb" id="10090-ENSMUSP00000021522"/>
<dbReference type="PeptideAtlas" id="Q80Y14"/>
<dbReference type="ProteomicsDB" id="270998"/>
<dbReference type="Pumba" id="Q80Y14"/>
<dbReference type="Antibodypedia" id="47425">
    <property type="antibodies" value="139 antibodies from 24 providers"/>
</dbReference>
<dbReference type="DNASU" id="73046"/>
<dbReference type="Ensembl" id="ENSMUST00000021522.5">
    <property type="protein sequence ID" value="ENSMUSP00000021522.4"/>
    <property type="gene ID" value="ENSMUSG00000021102.5"/>
</dbReference>
<dbReference type="GeneID" id="73046"/>
<dbReference type="KEGG" id="mmu:73046"/>
<dbReference type="UCSC" id="uc007oxu.1">
    <property type="organism name" value="mouse"/>
</dbReference>
<dbReference type="AGR" id="MGI:1920296"/>
<dbReference type="CTD" id="51218"/>
<dbReference type="MGI" id="MGI:1920296">
    <property type="gene designation" value="Glrx5"/>
</dbReference>
<dbReference type="VEuPathDB" id="HostDB:ENSMUSG00000021102"/>
<dbReference type="eggNOG" id="KOG0911">
    <property type="taxonomic scope" value="Eukaryota"/>
</dbReference>
<dbReference type="GeneTree" id="ENSGT00550000075082"/>
<dbReference type="HOGENOM" id="CLU_026126_2_0_1"/>
<dbReference type="InParanoid" id="Q80Y14"/>
<dbReference type="OMA" id="YEVLDEP"/>
<dbReference type="OrthoDB" id="415696at2759"/>
<dbReference type="PhylomeDB" id="Q80Y14"/>
<dbReference type="TreeFam" id="TF318988"/>
<dbReference type="Reactome" id="R-MMU-1362409">
    <property type="pathway name" value="Mitochondrial iron-sulfur cluster biogenesis"/>
</dbReference>
<dbReference type="BioGRID-ORCS" id="73046">
    <property type="hits" value="23 hits in 75 CRISPR screens"/>
</dbReference>
<dbReference type="ChiTaRS" id="Glrx5">
    <property type="organism name" value="mouse"/>
</dbReference>
<dbReference type="PRO" id="PR:Q80Y14"/>
<dbReference type="Proteomes" id="UP000000589">
    <property type="component" value="Chromosome 12"/>
</dbReference>
<dbReference type="RNAct" id="Q80Y14">
    <property type="molecule type" value="protein"/>
</dbReference>
<dbReference type="Bgee" id="ENSMUSG00000021102">
    <property type="expression patterns" value="Expressed in otolith organ and 218 other cell types or tissues"/>
</dbReference>
<dbReference type="ExpressionAtlas" id="Q80Y14">
    <property type="expression patterns" value="baseline and differential"/>
</dbReference>
<dbReference type="GO" id="GO:1990229">
    <property type="term" value="C:iron-sulfur cluster assembly complex"/>
    <property type="evidence" value="ECO:0007669"/>
    <property type="project" value="Ensembl"/>
</dbReference>
<dbReference type="GO" id="GO:0005759">
    <property type="term" value="C:mitochondrial matrix"/>
    <property type="evidence" value="ECO:0007669"/>
    <property type="project" value="UniProtKB-SubCell"/>
</dbReference>
<dbReference type="GO" id="GO:0005739">
    <property type="term" value="C:mitochondrion"/>
    <property type="evidence" value="ECO:0000314"/>
    <property type="project" value="UniProtKB"/>
</dbReference>
<dbReference type="GO" id="GO:0051537">
    <property type="term" value="F:2 iron, 2 sulfur cluster binding"/>
    <property type="evidence" value="ECO:0007669"/>
    <property type="project" value="UniProtKB-KW"/>
</dbReference>
<dbReference type="GO" id="GO:0046872">
    <property type="term" value="F:metal ion binding"/>
    <property type="evidence" value="ECO:0007669"/>
    <property type="project" value="UniProtKB-KW"/>
</dbReference>
<dbReference type="GO" id="GO:0044571">
    <property type="term" value="P:[2Fe-2S] cluster assembly"/>
    <property type="evidence" value="ECO:0007669"/>
    <property type="project" value="Ensembl"/>
</dbReference>
<dbReference type="GO" id="GO:0030097">
    <property type="term" value="P:hemopoiesis"/>
    <property type="evidence" value="ECO:0000250"/>
    <property type="project" value="UniProtKB"/>
</dbReference>
<dbReference type="GO" id="GO:0051604">
    <property type="term" value="P:protein maturation"/>
    <property type="evidence" value="ECO:0007669"/>
    <property type="project" value="Ensembl"/>
</dbReference>
<dbReference type="CDD" id="cd03028">
    <property type="entry name" value="GRX_PICOT_like"/>
    <property type="match status" value="1"/>
</dbReference>
<dbReference type="FunFam" id="3.40.30.10:FF:000005">
    <property type="entry name" value="Glutaredoxin 5"/>
    <property type="match status" value="1"/>
</dbReference>
<dbReference type="Gene3D" id="3.40.30.10">
    <property type="entry name" value="Glutaredoxin"/>
    <property type="match status" value="1"/>
</dbReference>
<dbReference type="InterPro" id="IPR002109">
    <property type="entry name" value="Glutaredoxin"/>
</dbReference>
<dbReference type="InterPro" id="IPR033658">
    <property type="entry name" value="GRX_PICOT-like"/>
</dbReference>
<dbReference type="InterPro" id="IPR004480">
    <property type="entry name" value="Monothiol_GRX-rel"/>
</dbReference>
<dbReference type="InterPro" id="IPR036249">
    <property type="entry name" value="Thioredoxin-like_sf"/>
</dbReference>
<dbReference type="NCBIfam" id="TIGR00365">
    <property type="entry name" value="Grx4 family monothiol glutaredoxin"/>
    <property type="match status" value="1"/>
</dbReference>
<dbReference type="PANTHER" id="PTHR10293">
    <property type="entry name" value="GLUTAREDOXIN FAMILY MEMBER"/>
    <property type="match status" value="1"/>
</dbReference>
<dbReference type="PANTHER" id="PTHR10293:SF16">
    <property type="entry name" value="GLUTAREDOXIN-RELATED PROTEIN 5, MITOCHONDRIAL"/>
    <property type="match status" value="1"/>
</dbReference>
<dbReference type="Pfam" id="PF00462">
    <property type="entry name" value="Glutaredoxin"/>
    <property type="match status" value="1"/>
</dbReference>
<dbReference type="SUPFAM" id="SSF52833">
    <property type="entry name" value="Thioredoxin-like"/>
    <property type="match status" value="1"/>
</dbReference>
<dbReference type="PROSITE" id="PS51354">
    <property type="entry name" value="GLUTAREDOXIN_2"/>
    <property type="match status" value="1"/>
</dbReference>
<feature type="transit peptide" description="Mitochondrion" evidence="2">
    <location>
        <begin position="1"/>
        <end position="31"/>
    </location>
</feature>
<feature type="chain" id="PRO_0000141651" description="Glutaredoxin-related protein 5, mitochondrial">
    <location>
        <begin position="32"/>
        <end position="152"/>
    </location>
</feature>
<feature type="domain" description="Glutaredoxin" evidence="3">
    <location>
        <begin position="38"/>
        <end position="141"/>
    </location>
</feature>
<feature type="binding site" evidence="1">
    <location>
        <position position="55"/>
    </location>
    <ligand>
        <name>glutathione</name>
        <dbReference type="ChEBI" id="CHEBI:57925"/>
    </ligand>
</feature>
<feature type="binding site" evidence="1">
    <location>
        <position position="63"/>
    </location>
    <ligand>
        <name>[2Fe-2S] cluster</name>
        <dbReference type="ChEBI" id="CHEBI:190135"/>
        <note>ligand shared between dimeric partners</note>
    </ligand>
</feature>
<feature type="binding site" evidence="1">
    <location>
        <begin position="93"/>
        <end position="97"/>
    </location>
    <ligand>
        <name>glutathione</name>
        <dbReference type="ChEBI" id="CHEBI:57925"/>
    </ligand>
</feature>
<feature type="binding site" evidence="1">
    <location>
        <position position="105"/>
    </location>
    <ligand>
        <name>glutathione</name>
        <dbReference type="ChEBI" id="CHEBI:57925"/>
    </ligand>
</feature>
<feature type="binding site" evidence="1">
    <location>
        <begin position="118"/>
        <end position="119"/>
    </location>
    <ligand>
        <name>glutathione</name>
        <dbReference type="ChEBI" id="CHEBI:57925"/>
    </ligand>
</feature>
<feature type="modified residue" description="N6-succinyllysine" evidence="8">
    <location>
        <position position="55"/>
    </location>
</feature>
<feature type="modified residue" description="Phosphoserine" evidence="7">
    <location>
        <position position="151"/>
    </location>
</feature>
<evidence type="ECO:0000250" key="1">
    <source>
        <dbReference type="UniProtKB" id="Q86SX6"/>
    </source>
</evidence>
<evidence type="ECO:0000255" key="2"/>
<evidence type="ECO:0000255" key="3">
    <source>
        <dbReference type="PROSITE-ProRule" id="PRU00686"/>
    </source>
</evidence>
<evidence type="ECO:0000269" key="4">
    <source>
    </source>
</evidence>
<evidence type="ECO:0000269" key="5">
    <source>
    </source>
</evidence>
<evidence type="ECO:0000305" key="6"/>
<evidence type="ECO:0007744" key="7">
    <source>
    </source>
</evidence>
<evidence type="ECO:0007744" key="8">
    <source>
    </source>
</evidence>
<protein>
    <recommendedName>
        <fullName>Glutaredoxin-related protein 5, mitochondrial</fullName>
    </recommendedName>
    <alternativeName>
        <fullName>Monothiol glutaredoxin-5</fullName>
    </alternativeName>
</protein>